<sequence>MKVLGIETSCDETGVAIFDTAAGLLGHCVHTQIALHAAYGGVVPELASRDHIRRLPLLVKQTLDAAGCELSQLDAIAYTAGPGLAGALLVGASFAESLGLALAVPVLPIHHLEGHLLSPLLAADPPAFPFVALLVSGGHTQLMRVTGVGEYALLGESVDDAAGEAFDKTAKLLGLGYPGGPQLAALAERGQTGRFRLPRPMLRSGDLDFSFSGLKTAVLNVVSAPTWRAEDVADLAADFQAAVVEVLCAKALRALEQTGLARLVVAGGVGANRHLRERLDASTRRKGCRVYYPEPELCTDNGAMIAFAGALRAAAGQRGGETPAVRVFPRWPLAELHSPVQP</sequence>
<dbReference type="EC" id="2.3.1.234" evidence="1"/>
<dbReference type="EMBL" id="CR555306">
    <property type="protein sequence ID" value="CAI08603.1"/>
    <property type="molecule type" value="Genomic_DNA"/>
</dbReference>
<dbReference type="RefSeq" id="WP_011238289.1">
    <property type="nucleotide sequence ID" value="NC_006513.1"/>
</dbReference>
<dbReference type="SMR" id="Q5P261"/>
<dbReference type="STRING" id="76114.ebA4371"/>
<dbReference type="KEGG" id="eba:ebA4371"/>
<dbReference type="eggNOG" id="COG0533">
    <property type="taxonomic scope" value="Bacteria"/>
</dbReference>
<dbReference type="HOGENOM" id="CLU_023208_0_0_4"/>
<dbReference type="OrthoDB" id="9806197at2"/>
<dbReference type="Proteomes" id="UP000006552">
    <property type="component" value="Chromosome"/>
</dbReference>
<dbReference type="GO" id="GO:0005737">
    <property type="term" value="C:cytoplasm"/>
    <property type="evidence" value="ECO:0007669"/>
    <property type="project" value="UniProtKB-SubCell"/>
</dbReference>
<dbReference type="GO" id="GO:0005506">
    <property type="term" value="F:iron ion binding"/>
    <property type="evidence" value="ECO:0007669"/>
    <property type="project" value="UniProtKB-UniRule"/>
</dbReference>
<dbReference type="GO" id="GO:0061711">
    <property type="term" value="F:N(6)-L-threonylcarbamoyladenine synthase activity"/>
    <property type="evidence" value="ECO:0007669"/>
    <property type="project" value="UniProtKB-EC"/>
</dbReference>
<dbReference type="GO" id="GO:0002949">
    <property type="term" value="P:tRNA threonylcarbamoyladenosine modification"/>
    <property type="evidence" value="ECO:0007669"/>
    <property type="project" value="UniProtKB-UniRule"/>
</dbReference>
<dbReference type="CDD" id="cd24133">
    <property type="entry name" value="ASKHA_NBD_TsaD_bac"/>
    <property type="match status" value="1"/>
</dbReference>
<dbReference type="FunFam" id="3.30.420.40:FF:000012">
    <property type="entry name" value="tRNA N6-adenosine threonylcarbamoyltransferase"/>
    <property type="match status" value="1"/>
</dbReference>
<dbReference type="FunFam" id="3.30.420.40:FF:000040">
    <property type="entry name" value="tRNA N6-adenosine threonylcarbamoyltransferase"/>
    <property type="match status" value="1"/>
</dbReference>
<dbReference type="Gene3D" id="3.30.420.40">
    <property type="match status" value="2"/>
</dbReference>
<dbReference type="HAMAP" id="MF_01445">
    <property type="entry name" value="TsaD"/>
    <property type="match status" value="1"/>
</dbReference>
<dbReference type="InterPro" id="IPR043129">
    <property type="entry name" value="ATPase_NBD"/>
</dbReference>
<dbReference type="InterPro" id="IPR000905">
    <property type="entry name" value="Gcp-like_dom"/>
</dbReference>
<dbReference type="InterPro" id="IPR017861">
    <property type="entry name" value="KAE1/TsaD"/>
</dbReference>
<dbReference type="InterPro" id="IPR022450">
    <property type="entry name" value="TsaD"/>
</dbReference>
<dbReference type="NCBIfam" id="TIGR00329">
    <property type="entry name" value="gcp_kae1"/>
    <property type="match status" value="1"/>
</dbReference>
<dbReference type="NCBIfam" id="TIGR03723">
    <property type="entry name" value="T6A_TsaD_YgjD"/>
    <property type="match status" value="1"/>
</dbReference>
<dbReference type="PANTHER" id="PTHR11735">
    <property type="entry name" value="TRNA N6-ADENOSINE THREONYLCARBAMOYLTRANSFERASE"/>
    <property type="match status" value="1"/>
</dbReference>
<dbReference type="PANTHER" id="PTHR11735:SF6">
    <property type="entry name" value="TRNA N6-ADENOSINE THREONYLCARBAMOYLTRANSFERASE, MITOCHONDRIAL"/>
    <property type="match status" value="1"/>
</dbReference>
<dbReference type="Pfam" id="PF00814">
    <property type="entry name" value="TsaD"/>
    <property type="match status" value="1"/>
</dbReference>
<dbReference type="PRINTS" id="PR00789">
    <property type="entry name" value="OSIALOPTASE"/>
</dbReference>
<dbReference type="SUPFAM" id="SSF53067">
    <property type="entry name" value="Actin-like ATPase domain"/>
    <property type="match status" value="2"/>
</dbReference>
<proteinExistence type="inferred from homology"/>
<comment type="function">
    <text evidence="1">Required for the formation of a threonylcarbamoyl group on adenosine at position 37 (t(6)A37) in tRNAs that read codons beginning with adenine. Is involved in the transfer of the threonylcarbamoyl moiety of threonylcarbamoyl-AMP (TC-AMP) to the N6 group of A37, together with TsaE and TsaB. TsaD likely plays a direct catalytic role in this reaction.</text>
</comment>
<comment type="catalytic activity">
    <reaction evidence="1">
        <text>L-threonylcarbamoyladenylate + adenosine(37) in tRNA = N(6)-L-threonylcarbamoyladenosine(37) in tRNA + AMP + H(+)</text>
        <dbReference type="Rhea" id="RHEA:37059"/>
        <dbReference type="Rhea" id="RHEA-COMP:10162"/>
        <dbReference type="Rhea" id="RHEA-COMP:10163"/>
        <dbReference type="ChEBI" id="CHEBI:15378"/>
        <dbReference type="ChEBI" id="CHEBI:73682"/>
        <dbReference type="ChEBI" id="CHEBI:74411"/>
        <dbReference type="ChEBI" id="CHEBI:74418"/>
        <dbReference type="ChEBI" id="CHEBI:456215"/>
        <dbReference type="EC" id="2.3.1.234"/>
    </reaction>
</comment>
<comment type="cofactor">
    <cofactor evidence="1">
        <name>Fe(2+)</name>
        <dbReference type="ChEBI" id="CHEBI:29033"/>
    </cofactor>
    <text evidence="1">Binds 1 Fe(2+) ion per subunit.</text>
</comment>
<comment type="subcellular location">
    <subcellularLocation>
        <location evidence="1">Cytoplasm</location>
    </subcellularLocation>
</comment>
<comment type="similarity">
    <text evidence="1">Belongs to the KAE1 / TsaD family.</text>
</comment>
<feature type="chain" id="PRO_0000303261" description="tRNA N6-adenosine threonylcarbamoyltransferase">
    <location>
        <begin position="1"/>
        <end position="342"/>
    </location>
</feature>
<feature type="binding site" evidence="1">
    <location>
        <position position="111"/>
    </location>
    <ligand>
        <name>Fe cation</name>
        <dbReference type="ChEBI" id="CHEBI:24875"/>
    </ligand>
</feature>
<feature type="binding site" evidence="1">
    <location>
        <position position="115"/>
    </location>
    <ligand>
        <name>Fe cation</name>
        <dbReference type="ChEBI" id="CHEBI:24875"/>
    </ligand>
</feature>
<feature type="binding site" evidence="1">
    <location>
        <begin position="134"/>
        <end position="138"/>
    </location>
    <ligand>
        <name>substrate</name>
    </ligand>
</feature>
<feature type="binding site" evidence="1">
    <location>
        <position position="167"/>
    </location>
    <ligand>
        <name>substrate</name>
    </ligand>
</feature>
<feature type="binding site" evidence="1">
    <location>
        <position position="180"/>
    </location>
    <ligand>
        <name>substrate</name>
    </ligand>
</feature>
<feature type="binding site" evidence="1">
    <location>
        <position position="272"/>
    </location>
    <ligand>
        <name>substrate</name>
    </ligand>
</feature>
<feature type="binding site" evidence="1">
    <location>
        <position position="300"/>
    </location>
    <ligand>
        <name>Fe cation</name>
        <dbReference type="ChEBI" id="CHEBI:24875"/>
    </ligand>
</feature>
<gene>
    <name evidence="1" type="primary">tsaD</name>
    <name type="synonym">gcp</name>
    <name type="ordered locus">AZOSEA24780</name>
    <name type="ORF">ebA4371</name>
</gene>
<accession>Q5P261</accession>
<organism>
    <name type="scientific">Aromatoleum aromaticum (strain DSM 19018 / LMG 30748 / EbN1)</name>
    <name type="common">Azoarcus sp. (strain EbN1)</name>
    <dbReference type="NCBI Taxonomy" id="76114"/>
    <lineage>
        <taxon>Bacteria</taxon>
        <taxon>Pseudomonadati</taxon>
        <taxon>Pseudomonadota</taxon>
        <taxon>Betaproteobacteria</taxon>
        <taxon>Rhodocyclales</taxon>
        <taxon>Rhodocyclaceae</taxon>
        <taxon>Aromatoleum</taxon>
    </lineage>
</organism>
<protein>
    <recommendedName>
        <fullName evidence="1">tRNA N6-adenosine threonylcarbamoyltransferase</fullName>
        <ecNumber evidence="1">2.3.1.234</ecNumber>
    </recommendedName>
    <alternativeName>
        <fullName evidence="1">N6-L-threonylcarbamoyladenine synthase</fullName>
        <shortName evidence="1">t(6)A synthase</shortName>
    </alternativeName>
    <alternativeName>
        <fullName evidence="1">t(6)A37 threonylcarbamoyladenosine biosynthesis protein TsaD</fullName>
    </alternativeName>
    <alternativeName>
        <fullName evidence="1">tRNA threonylcarbamoyladenosine biosynthesis protein TsaD</fullName>
    </alternativeName>
</protein>
<evidence type="ECO:0000255" key="1">
    <source>
        <dbReference type="HAMAP-Rule" id="MF_01445"/>
    </source>
</evidence>
<reference key="1">
    <citation type="journal article" date="2005" name="Arch. Microbiol.">
        <title>The genome sequence of an anaerobic aromatic-degrading denitrifying bacterium, strain EbN1.</title>
        <authorList>
            <person name="Rabus R."/>
            <person name="Kube M."/>
            <person name="Heider J."/>
            <person name="Beck A."/>
            <person name="Heitmann K."/>
            <person name="Widdel F."/>
            <person name="Reinhardt R."/>
        </authorList>
    </citation>
    <scope>NUCLEOTIDE SEQUENCE [LARGE SCALE GENOMIC DNA]</scope>
    <source>
        <strain>DSM 19018 / LMG 30748 / EbN1</strain>
    </source>
</reference>
<name>TSAD_AROAE</name>
<keyword id="KW-0012">Acyltransferase</keyword>
<keyword id="KW-0963">Cytoplasm</keyword>
<keyword id="KW-0408">Iron</keyword>
<keyword id="KW-0479">Metal-binding</keyword>
<keyword id="KW-1185">Reference proteome</keyword>
<keyword id="KW-0808">Transferase</keyword>
<keyword id="KW-0819">tRNA processing</keyword>